<feature type="chain" id="PRO_0000060361" description="tRNA (guanine-N(1)-)-methyltransferase">
    <location>
        <begin position="1"/>
        <end position="236"/>
    </location>
</feature>
<feature type="binding site" evidence="1">
    <location>
        <position position="110"/>
    </location>
    <ligand>
        <name>S-adenosyl-L-methionine</name>
        <dbReference type="ChEBI" id="CHEBI:59789"/>
    </ligand>
</feature>
<feature type="binding site" evidence="1">
    <location>
        <begin position="129"/>
        <end position="134"/>
    </location>
    <ligand>
        <name>S-adenosyl-L-methionine</name>
        <dbReference type="ChEBI" id="CHEBI:59789"/>
    </ligand>
</feature>
<dbReference type="EC" id="2.1.1.228"/>
<dbReference type="EMBL" id="BA000016">
    <property type="protein sequence ID" value="BAB81415.1"/>
    <property type="molecule type" value="Genomic_DNA"/>
</dbReference>
<dbReference type="RefSeq" id="WP_011010574.1">
    <property type="nucleotide sequence ID" value="NC_003366.1"/>
</dbReference>
<dbReference type="SMR" id="Q8XJP7"/>
<dbReference type="STRING" id="195102.gene:10490973"/>
<dbReference type="KEGG" id="cpe:CPE1709"/>
<dbReference type="HOGENOM" id="CLU_047363_0_1_9"/>
<dbReference type="Proteomes" id="UP000000818">
    <property type="component" value="Chromosome"/>
</dbReference>
<dbReference type="GO" id="GO:0005829">
    <property type="term" value="C:cytosol"/>
    <property type="evidence" value="ECO:0007669"/>
    <property type="project" value="TreeGrafter"/>
</dbReference>
<dbReference type="GO" id="GO:0052906">
    <property type="term" value="F:tRNA (guanine(37)-N1)-methyltransferase activity"/>
    <property type="evidence" value="ECO:0007669"/>
    <property type="project" value="UniProtKB-UniRule"/>
</dbReference>
<dbReference type="GO" id="GO:0002939">
    <property type="term" value="P:tRNA N1-guanine methylation"/>
    <property type="evidence" value="ECO:0007669"/>
    <property type="project" value="TreeGrafter"/>
</dbReference>
<dbReference type="CDD" id="cd18080">
    <property type="entry name" value="TrmD-like"/>
    <property type="match status" value="1"/>
</dbReference>
<dbReference type="FunFam" id="1.10.1270.20:FF:000001">
    <property type="entry name" value="tRNA (guanine-N(1)-)-methyltransferase"/>
    <property type="match status" value="1"/>
</dbReference>
<dbReference type="FunFam" id="3.40.1280.10:FF:000001">
    <property type="entry name" value="tRNA (guanine-N(1)-)-methyltransferase"/>
    <property type="match status" value="1"/>
</dbReference>
<dbReference type="Gene3D" id="3.40.1280.10">
    <property type="match status" value="1"/>
</dbReference>
<dbReference type="Gene3D" id="1.10.1270.20">
    <property type="entry name" value="tRNA(m1g37)methyltransferase, domain 2"/>
    <property type="match status" value="1"/>
</dbReference>
<dbReference type="HAMAP" id="MF_00605">
    <property type="entry name" value="TrmD"/>
    <property type="match status" value="1"/>
</dbReference>
<dbReference type="InterPro" id="IPR029028">
    <property type="entry name" value="Alpha/beta_knot_MTases"/>
</dbReference>
<dbReference type="InterPro" id="IPR023148">
    <property type="entry name" value="tRNA_m1G_MeTrfase_C_sf"/>
</dbReference>
<dbReference type="InterPro" id="IPR002649">
    <property type="entry name" value="tRNA_m1G_MeTrfase_TrmD"/>
</dbReference>
<dbReference type="InterPro" id="IPR029026">
    <property type="entry name" value="tRNA_m1G_MTases_N"/>
</dbReference>
<dbReference type="InterPro" id="IPR016009">
    <property type="entry name" value="tRNA_MeTrfase_TRMD/TRM10"/>
</dbReference>
<dbReference type="NCBIfam" id="NF000648">
    <property type="entry name" value="PRK00026.1"/>
    <property type="match status" value="1"/>
</dbReference>
<dbReference type="NCBIfam" id="TIGR00088">
    <property type="entry name" value="trmD"/>
    <property type="match status" value="1"/>
</dbReference>
<dbReference type="PANTHER" id="PTHR46417">
    <property type="entry name" value="TRNA (GUANINE-N(1)-)-METHYLTRANSFERASE"/>
    <property type="match status" value="1"/>
</dbReference>
<dbReference type="PANTHER" id="PTHR46417:SF1">
    <property type="entry name" value="TRNA (GUANINE-N(1)-)-METHYLTRANSFERASE"/>
    <property type="match status" value="1"/>
</dbReference>
<dbReference type="Pfam" id="PF01746">
    <property type="entry name" value="tRNA_m1G_MT"/>
    <property type="match status" value="1"/>
</dbReference>
<dbReference type="PIRSF" id="PIRSF000386">
    <property type="entry name" value="tRNA_mtase"/>
    <property type="match status" value="1"/>
</dbReference>
<dbReference type="SUPFAM" id="SSF75217">
    <property type="entry name" value="alpha/beta knot"/>
    <property type="match status" value="1"/>
</dbReference>
<keyword id="KW-0963">Cytoplasm</keyword>
<keyword id="KW-0489">Methyltransferase</keyword>
<keyword id="KW-1185">Reference proteome</keyword>
<keyword id="KW-0949">S-adenosyl-L-methionine</keyword>
<keyword id="KW-0808">Transferase</keyword>
<keyword id="KW-0819">tRNA processing</keyword>
<evidence type="ECO:0000250" key="1"/>
<evidence type="ECO:0000305" key="2"/>
<sequence length="236" mass="27261">MKINILTLFPEMFDIFKHSIIGRARENGFLHIETINIRDYTLNKHKKVDDYPYGGGAGMVMTPQPVVDAIKAVKEKNKGKVIFLGPRGKTFNQEMAKELSKEEELVFVCGHYEGIDQRVYKYFDLEISLGDFVLTGGEMACIPVIDSISRLVPGVLGSEESFQDESYYDGTLEYPQYTRPFEFEGEKVPEVLMSGHHENIRKWRRKQSLLITKERRPDMFEKIKLSKEDIKLLKSK</sequence>
<name>TRMD_CLOPE</name>
<proteinExistence type="inferred from homology"/>
<protein>
    <recommendedName>
        <fullName>tRNA (guanine-N(1)-)-methyltransferase</fullName>
        <ecNumber>2.1.1.228</ecNumber>
    </recommendedName>
    <alternativeName>
        <fullName>M1G-methyltransferase</fullName>
    </alternativeName>
    <alternativeName>
        <fullName>tRNA [GM37] methyltransferase</fullName>
    </alternativeName>
</protein>
<comment type="function">
    <text evidence="1">Specifically methylates guanosine-37 in various tRNAs.</text>
</comment>
<comment type="catalytic activity">
    <reaction>
        <text>guanosine(37) in tRNA + S-adenosyl-L-methionine = N(1)-methylguanosine(37) in tRNA + S-adenosyl-L-homocysteine + H(+)</text>
        <dbReference type="Rhea" id="RHEA:36899"/>
        <dbReference type="Rhea" id="RHEA-COMP:10145"/>
        <dbReference type="Rhea" id="RHEA-COMP:10147"/>
        <dbReference type="ChEBI" id="CHEBI:15378"/>
        <dbReference type="ChEBI" id="CHEBI:57856"/>
        <dbReference type="ChEBI" id="CHEBI:59789"/>
        <dbReference type="ChEBI" id="CHEBI:73542"/>
        <dbReference type="ChEBI" id="CHEBI:74269"/>
        <dbReference type="EC" id="2.1.1.228"/>
    </reaction>
</comment>
<comment type="subunit">
    <text evidence="1">Homodimer.</text>
</comment>
<comment type="subcellular location">
    <subcellularLocation>
        <location evidence="2">Cytoplasm</location>
    </subcellularLocation>
</comment>
<comment type="similarity">
    <text evidence="2">Belongs to the RNA methyltransferase TrmD family.</text>
</comment>
<organism>
    <name type="scientific">Clostridium perfringens (strain 13 / Type A)</name>
    <dbReference type="NCBI Taxonomy" id="195102"/>
    <lineage>
        <taxon>Bacteria</taxon>
        <taxon>Bacillati</taxon>
        <taxon>Bacillota</taxon>
        <taxon>Clostridia</taxon>
        <taxon>Eubacteriales</taxon>
        <taxon>Clostridiaceae</taxon>
        <taxon>Clostridium</taxon>
    </lineage>
</organism>
<reference key="1">
    <citation type="journal article" date="2002" name="Proc. Natl. Acad. Sci. U.S.A.">
        <title>Complete genome sequence of Clostridium perfringens, an anaerobic flesh-eater.</title>
        <authorList>
            <person name="Shimizu T."/>
            <person name="Ohtani K."/>
            <person name="Hirakawa H."/>
            <person name="Ohshima K."/>
            <person name="Yamashita A."/>
            <person name="Shiba T."/>
            <person name="Ogasawara N."/>
            <person name="Hattori M."/>
            <person name="Kuhara S."/>
            <person name="Hayashi H."/>
        </authorList>
    </citation>
    <scope>NUCLEOTIDE SEQUENCE [LARGE SCALE GENOMIC DNA]</scope>
    <source>
        <strain>13 / Type A</strain>
    </source>
</reference>
<accession>Q8XJP7</accession>
<gene>
    <name type="primary">trmD</name>
    <name type="ordered locus">CPE1709</name>
</gene>